<keyword id="KW-0066">ATP synthesis</keyword>
<keyword id="KW-0997">Cell inner membrane</keyword>
<keyword id="KW-1003">Cell membrane</keyword>
<keyword id="KW-0138">CF(0)</keyword>
<keyword id="KW-0375">Hydrogen ion transport</keyword>
<keyword id="KW-0406">Ion transport</keyword>
<keyword id="KW-0472">Membrane</keyword>
<keyword id="KW-1185">Reference proteome</keyword>
<keyword id="KW-0812">Transmembrane</keyword>
<keyword id="KW-1133">Transmembrane helix</keyword>
<keyword id="KW-0813">Transport</keyword>
<dbReference type="EMBL" id="CP000010">
    <property type="protein sequence ID" value="AAU48028.1"/>
    <property type="molecule type" value="Genomic_DNA"/>
</dbReference>
<dbReference type="RefSeq" id="WP_004185283.1">
    <property type="nucleotide sequence ID" value="NC_006348.1"/>
</dbReference>
<dbReference type="RefSeq" id="YP_104458.1">
    <property type="nucleotide sequence ID" value="NC_006348.1"/>
</dbReference>
<dbReference type="SMR" id="Q62FR9"/>
<dbReference type="KEGG" id="bma:BMA2953"/>
<dbReference type="PATRIC" id="fig|243160.12.peg.3022"/>
<dbReference type="eggNOG" id="COG0711">
    <property type="taxonomic scope" value="Bacteria"/>
</dbReference>
<dbReference type="HOGENOM" id="CLU_079215_4_5_4"/>
<dbReference type="Proteomes" id="UP000006693">
    <property type="component" value="Chromosome 1"/>
</dbReference>
<dbReference type="GO" id="GO:0005886">
    <property type="term" value="C:plasma membrane"/>
    <property type="evidence" value="ECO:0007669"/>
    <property type="project" value="UniProtKB-SubCell"/>
</dbReference>
<dbReference type="GO" id="GO:0045259">
    <property type="term" value="C:proton-transporting ATP synthase complex"/>
    <property type="evidence" value="ECO:0007669"/>
    <property type="project" value="UniProtKB-KW"/>
</dbReference>
<dbReference type="GO" id="GO:0046933">
    <property type="term" value="F:proton-transporting ATP synthase activity, rotational mechanism"/>
    <property type="evidence" value="ECO:0007669"/>
    <property type="project" value="UniProtKB-UniRule"/>
</dbReference>
<dbReference type="GO" id="GO:0046961">
    <property type="term" value="F:proton-transporting ATPase activity, rotational mechanism"/>
    <property type="evidence" value="ECO:0007669"/>
    <property type="project" value="TreeGrafter"/>
</dbReference>
<dbReference type="CDD" id="cd06503">
    <property type="entry name" value="ATP-synt_Fo_b"/>
    <property type="match status" value="1"/>
</dbReference>
<dbReference type="Gene3D" id="6.10.250.1580">
    <property type="match status" value="1"/>
</dbReference>
<dbReference type="HAMAP" id="MF_01398">
    <property type="entry name" value="ATP_synth_b_bprime"/>
    <property type="match status" value="1"/>
</dbReference>
<dbReference type="InterPro" id="IPR028987">
    <property type="entry name" value="ATP_synth_B-like_membr_sf"/>
</dbReference>
<dbReference type="InterPro" id="IPR002146">
    <property type="entry name" value="ATP_synth_b/b'su_bac/chlpt"/>
</dbReference>
<dbReference type="InterPro" id="IPR005864">
    <property type="entry name" value="ATP_synth_F0_bsu_bac"/>
</dbReference>
<dbReference type="InterPro" id="IPR050059">
    <property type="entry name" value="ATP_synthase_B_chain"/>
</dbReference>
<dbReference type="NCBIfam" id="TIGR01144">
    <property type="entry name" value="ATP_synt_b"/>
    <property type="match status" value="1"/>
</dbReference>
<dbReference type="NCBIfam" id="NF004411">
    <property type="entry name" value="PRK05759.1-2"/>
    <property type="match status" value="1"/>
</dbReference>
<dbReference type="PANTHER" id="PTHR33445:SF1">
    <property type="entry name" value="ATP SYNTHASE SUBUNIT B"/>
    <property type="match status" value="1"/>
</dbReference>
<dbReference type="PANTHER" id="PTHR33445">
    <property type="entry name" value="ATP SYNTHASE SUBUNIT B', CHLOROPLASTIC"/>
    <property type="match status" value="1"/>
</dbReference>
<dbReference type="Pfam" id="PF00430">
    <property type="entry name" value="ATP-synt_B"/>
    <property type="match status" value="1"/>
</dbReference>
<dbReference type="SUPFAM" id="SSF81573">
    <property type="entry name" value="F1F0 ATP synthase subunit B, membrane domain"/>
    <property type="match status" value="1"/>
</dbReference>
<proteinExistence type="inferred from homology"/>
<accession>Q62FR9</accession>
<evidence type="ECO:0000255" key="1">
    <source>
        <dbReference type="HAMAP-Rule" id="MF_01398"/>
    </source>
</evidence>
<gene>
    <name evidence="1" type="primary">atpF</name>
    <name type="ordered locus">BMA2953</name>
</gene>
<feature type="chain" id="PRO_0000368384" description="ATP synthase subunit b">
    <location>
        <begin position="1"/>
        <end position="156"/>
    </location>
</feature>
<feature type="transmembrane region" description="Helical" evidence="1">
    <location>
        <begin position="7"/>
        <end position="29"/>
    </location>
</feature>
<comment type="function">
    <text evidence="1">F(1)F(0) ATP synthase produces ATP from ADP in the presence of a proton or sodium gradient. F-type ATPases consist of two structural domains, F(1) containing the extramembraneous catalytic core and F(0) containing the membrane proton channel, linked together by a central stalk and a peripheral stalk. During catalysis, ATP synthesis in the catalytic domain of F(1) is coupled via a rotary mechanism of the central stalk subunits to proton translocation.</text>
</comment>
<comment type="function">
    <text evidence="1">Component of the F(0) channel, it forms part of the peripheral stalk, linking F(1) to F(0).</text>
</comment>
<comment type="subunit">
    <text evidence="1">F-type ATPases have 2 components, F(1) - the catalytic core - and F(0) - the membrane proton channel. F(1) has five subunits: alpha(3), beta(3), gamma(1), delta(1), epsilon(1). F(0) has three main subunits: a(1), b(2) and c(10-14). The alpha and beta chains form an alternating ring which encloses part of the gamma chain. F(1) is attached to F(0) by a central stalk formed by the gamma and epsilon chains, while a peripheral stalk is formed by the delta and b chains.</text>
</comment>
<comment type="subcellular location">
    <subcellularLocation>
        <location evidence="1">Cell inner membrane</location>
        <topology evidence="1">Single-pass membrane protein</topology>
    </subcellularLocation>
</comment>
<comment type="similarity">
    <text evidence="1">Belongs to the ATPase B chain family.</text>
</comment>
<protein>
    <recommendedName>
        <fullName evidence="1">ATP synthase subunit b</fullName>
    </recommendedName>
    <alternativeName>
        <fullName evidence="1">ATP synthase F(0) sector subunit b</fullName>
    </alternativeName>
    <alternativeName>
        <fullName evidence="1">ATPase subunit I</fullName>
    </alternativeName>
    <alternativeName>
        <fullName evidence="1">F-type ATPase subunit b</fullName>
        <shortName evidence="1">F-ATPase subunit b</shortName>
    </alternativeName>
</protein>
<organism>
    <name type="scientific">Burkholderia mallei (strain ATCC 23344)</name>
    <dbReference type="NCBI Taxonomy" id="243160"/>
    <lineage>
        <taxon>Bacteria</taxon>
        <taxon>Pseudomonadati</taxon>
        <taxon>Pseudomonadota</taxon>
        <taxon>Betaproteobacteria</taxon>
        <taxon>Burkholderiales</taxon>
        <taxon>Burkholderiaceae</taxon>
        <taxon>Burkholderia</taxon>
        <taxon>pseudomallei group</taxon>
    </lineage>
</organism>
<name>ATPF_BURMA</name>
<sequence length="156" mass="17122">MNLNATLFAQMVVFLVLAWFTMKFVWPPLINALDERSKKIADGLAAAEKGKAELEAAHKRVDQELAQARNDGQQRIADAEKRALAVADEIKTNAQAEAARIIAQAKAEAEQQIVKARETLRGEVAALAVKGAEQILKREVDQTAHAELLNQLKAEL</sequence>
<reference key="1">
    <citation type="journal article" date="2004" name="Proc. Natl. Acad. Sci. U.S.A.">
        <title>Structural flexibility in the Burkholderia mallei genome.</title>
        <authorList>
            <person name="Nierman W.C."/>
            <person name="DeShazer D."/>
            <person name="Kim H.S."/>
            <person name="Tettelin H."/>
            <person name="Nelson K.E."/>
            <person name="Feldblyum T.V."/>
            <person name="Ulrich R.L."/>
            <person name="Ronning C.M."/>
            <person name="Brinkac L.M."/>
            <person name="Daugherty S.C."/>
            <person name="Davidsen T.D."/>
            <person name="DeBoy R.T."/>
            <person name="Dimitrov G."/>
            <person name="Dodson R.J."/>
            <person name="Durkin A.S."/>
            <person name="Gwinn M.L."/>
            <person name="Haft D.H."/>
            <person name="Khouri H.M."/>
            <person name="Kolonay J.F."/>
            <person name="Madupu R."/>
            <person name="Mohammoud Y."/>
            <person name="Nelson W.C."/>
            <person name="Radune D."/>
            <person name="Romero C.M."/>
            <person name="Sarria S."/>
            <person name="Selengut J."/>
            <person name="Shamblin C."/>
            <person name="Sullivan S.A."/>
            <person name="White O."/>
            <person name="Yu Y."/>
            <person name="Zafar N."/>
            <person name="Zhou L."/>
            <person name="Fraser C.M."/>
        </authorList>
    </citation>
    <scope>NUCLEOTIDE SEQUENCE [LARGE SCALE GENOMIC DNA]</scope>
    <source>
        <strain>ATCC 23344</strain>
    </source>
</reference>